<accession>Q83R06</accession>
<reference key="1">
    <citation type="journal article" date="2002" name="Nucleic Acids Res.">
        <title>Genome sequence of Shigella flexneri 2a: insights into pathogenicity through comparison with genomes of Escherichia coli K12 and O157.</title>
        <authorList>
            <person name="Jin Q."/>
            <person name="Yuan Z."/>
            <person name="Xu J."/>
            <person name="Wang Y."/>
            <person name="Shen Y."/>
            <person name="Lu W."/>
            <person name="Wang J."/>
            <person name="Liu H."/>
            <person name="Yang J."/>
            <person name="Yang F."/>
            <person name="Zhang X."/>
            <person name="Zhang J."/>
            <person name="Yang G."/>
            <person name="Wu H."/>
            <person name="Qu D."/>
            <person name="Dong J."/>
            <person name="Sun L."/>
            <person name="Xue Y."/>
            <person name="Zhao A."/>
            <person name="Gao Y."/>
            <person name="Zhu J."/>
            <person name="Kan B."/>
            <person name="Ding K."/>
            <person name="Chen S."/>
            <person name="Cheng H."/>
            <person name="Yao Z."/>
            <person name="He B."/>
            <person name="Chen R."/>
            <person name="Ma D."/>
            <person name="Qiang B."/>
            <person name="Wen Y."/>
            <person name="Hou Y."/>
            <person name="Yu J."/>
        </authorList>
    </citation>
    <scope>NUCLEOTIDE SEQUENCE [LARGE SCALE GENOMIC DNA]</scope>
    <source>
        <strain>301 / Serotype 2a</strain>
    </source>
</reference>
<reference key="2">
    <citation type="journal article" date="2003" name="Infect. Immun.">
        <title>Complete genome sequence and comparative genomics of Shigella flexneri serotype 2a strain 2457T.</title>
        <authorList>
            <person name="Wei J."/>
            <person name="Goldberg M.B."/>
            <person name="Burland V."/>
            <person name="Venkatesan M.M."/>
            <person name="Deng W."/>
            <person name="Fournier G."/>
            <person name="Mayhew G.F."/>
            <person name="Plunkett G. III"/>
            <person name="Rose D.J."/>
            <person name="Darling A."/>
            <person name="Mau B."/>
            <person name="Perna N.T."/>
            <person name="Payne S.M."/>
            <person name="Runyen-Janecky L.J."/>
            <person name="Zhou S."/>
            <person name="Schwartz D.C."/>
            <person name="Blattner F.R."/>
        </authorList>
    </citation>
    <scope>NUCLEOTIDE SEQUENCE [LARGE SCALE GENOMIC DNA]</scope>
    <source>
        <strain>ATCC 700930 / 2457T / Serotype 2a</strain>
    </source>
</reference>
<proteinExistence type="inferred from homology"/>
<gene>
    <name type="primary">hisL</name>
    <name type="ordered locus">SF2080</name>
    <name type="ordered locus">S2201.1</name>
</gene>
<sequence length="13" mass="1670">MTRVQFKHHHHPD</sequence>
<evidence type="ECO:0000250" key="1"/>
<evidence type="ECO:0000305" key="2"/>
<dbReference type="EMBL" id="AE005674">
    <property type="protein sequence ID" value="AAN43620.1"/>
    <property type="molecule type" value="Genomic_DNA"/>
</dbReference>
<dbReference type="EMBL" id="AE014073">
    <property type="status" value="NOT_ANNOTATED_CDS"/>
    <property type="molecule type" value="Genomic_DNA"/>
</dbReference>
<dbReference type="HOGENOM" id="CLU_3435917_0_0_6"/>
<dbReference type="Proteomes" id="UP000001006">
    <property type="component" value="Chromosome"/>
</dbReference>
<dbReference type="Proteomes" id="UP000002673">
    <property type="component" value="Chromosome"/>
</dbReference>
<dbReference type="GO" id="GO:0000105">
    <property type="term" value="P:L-histidine biosynthetic process"/>
    <property type="evidence" value="ECO:0007669"/>
    <property type="project" value="UniProtKB-KW"/>
</dbReference>
<dbReference type="InterPro" id="IPR012565">
    <property type="entry name" value="His_leader"/>
</dbReference>
<dbReference type="Pfam" id="PF08047">
    <property type="entry name" value="His_leader"/>
    <property type="match status" value="1"/>
</dbReference>
<name>LPHI_SHIFL</name>
<comment type="function">
    <text evidence="1">This protein is involved in the attenuation mechanism for the control of the expression of the his operon structural genes.</text>
</comment>
<comment type="similarity">
    <text evidence="2">Belongs to the HisL family.</text>
</comment>
<feature type="peptide" id="PRO_0000043992" description="his operon leader peptide">
    <location>
        <begin position="1"/>
        <end position="13"/>
    </location>
</feature>
<keyword id="KW-0028">Amino-acid biosynthesis</keyword>
<keyword id="KW-0368">Histidine biosynthesis</keyword>
<keyword id="KW-0428">Leader peptide</keyword>
<keyword id="KW-1185">Reference proteome</keyword>
<organism>
    <name type="scientific">Shigella flexneri</name>
    <dbReference type="NCBI Taxonomy" id="623"/>
    <lineage>
        <taxon>Bacteria</taxon>
        <taxon>Pseudomonadati</taxon>
        <taxon>Pseudomonadota</taxon>
        <taxon>Gammaproteobacteria</taxon>
        <taxon>Enterobacterales</taxon>
        <taxon>Enterobacteriaceae</taxon>
        <taxon>Shigella</taxon>
    </lineage>
</organism>
<protein>
    <recommendedName>
        <fullName>his operon leader peptide</fullName>
    </recommendedName>
    <alternativeName>
        <fullName>his operon attenuator peptide</fullName>
    </alternativeName>
</protein>